<organism>
    <name type="scientific">Haemophilus influenzae (strain PittEE)</name>
    <dbReference type="NCBI Taxonomy" id="374930"/>
    <lineage>
        <taxon>Bacteria</taxon>
        <taxon>Pseudomonadati</taxon>
        <taxon>Pseudomonadota</taxon>
        <taxon>Gammaproteobacteria</taxon>
        <taxon>Pasteurellales</taxon>
        <taxon>Pasteurellaceae</taxon>
        <taxon>Haemophilus</taxon>
    </lineage>
</organism>
<evidence type="ECO:0000255" key="1">
    <source>
        <dbReference type="HAMAP-Rule" id="MF_00106"/>
    </source>
</evidence>
<keyword id="KW-0408">Iron</keyword>
<keyword id="KW-0456">Lyase</keyword>
<keyword id="KW-0464">Manganese</keyword>
<name>UXUA_HAEIE</name>
<reference key="1">
    <citation type="journal article" date="2007" name="Genome Biol.">
        <title>Characterization and modeling of the Haemophilus influenzae core and supragenomes based on the complete genomic sequences of Rd and 12 clinical nontypeable strains.</title>
        <authorList>
            <person name="Hogg J.S."/>
            <person name="Hu F.Z."/>
            <person name="Janto B."/>
            <person name="Boissy R."/>
            <person name="Hayes J."/>
            <person name="Keefe R."/>
            <person name="Post J.C."/>
            <person name="Ehrlich G.D."/>
        </authorList>
    </citation>
    <scope>NUCLEOTIDE SEQUENCE [LARGE SCALE GENOMIC DNA]</scope>
    <source>
        <strain>PittEE</strain>
    </source>
</reference>
<protein>
    <recommendedName>
        <fullName evidence="1">Mannonate dehydratase</fullName>
        <ecNumber evidence="1">4.2.1.8</ecNumber>
    </recommendedName>
    <alternativeName>
        <fullName evidence="1">D-mannonate hydro-lyase</fullName>
    </alternativeName>
</protein>
<comment type="function">
    <text evidence="1">Catalyzes the dehydration of D-mannonate.</text>
</comment>
<comment type="catalytic activity">
    <reaction evidence="1">
        <text>D-mannonate = 2-dehydro-3-deoxy-D-gluconate + H2O</text>
        <dbReference type="Rhea" id="RHEA:20097"/>
        <dbReference type="ChEBI" id="CHEBI:15377"/>
        <dbReference type="ChEBI" id="CHEBI:17767"/>
        <dbReference type="ChEBI" id="CHEBI:57990"/>
        <dbReference type="EC" id="4.2.1.8"/>
    </reaction>
</comment>
<comment type="cofactor">
    <cofactor evidence="1">
        <name>Fe(2+)</name>
        <dbReference type="ChEBI" id="CHEBI:29033"/>
    </cofactor>
    <cofactor evidence="1">
        <name>Mn(2+)</name>
        <dbReference type="ChEBI" id="CHEBI:29035"/>
    </cofactor>
</comment>
<comment type="pathway">
    <text evidence="1">Carbohydrate metabolism; pentose and glucuronate interconversion.</text>
</comment>
<comment type="similarity">
    <text evidence="1">Belongs to the mannonate dehydratase family.</text>
</comment>
<dbReference type="EC" id="4.2.1.8" evidence="1"/>
<dbReference type="EMBL" id="CP000671">
    <property type="protein sequence ID" value="ABQ98036.1"/>
    <property type="molecule type" value="Genomic_DNA"/>
</dbReference>
<dbReference type="SMR" id="A5UB85"/>
<dbReference type="KEGG" id="hip:CGSHiEE_03030"/>
<dbReference type="HOGENOM" id="CLU_058621_2_0_6"/>
<dbReference type="UniPathway" id="UPA00246"/>
<dbReference type="GO" id="GO:0008198">
    <property type="term" value="F:ferrous iron binding"/>
    <property type="evidence" value="ECO:0007669"/>
    <property type="project" value="TreeGrafter"/>
</dbReference>
<dbReference type="GO" id="GO:0030145">
    <property type="term" value="F:manganese ion binding"/>
    <property type="evidence" value="ECO:0007669"/>
    <property type="project" value="TreeGrafter"/>
</dbReference>
<dbReference type="GO" id="GO:0008927">
    <property type="term" value="F:mannonate dehydratase activity"/>
    <property type="evidence" value="ECO:0007669"/>
    <property type="project" value="UniProtKB-UniRule"/>
</dbReference>
<dbReference type="GO" id="GO:0042840">
    <property type="term" value="P:D-glucuronate catabolic process"/>
    <property type="evidence" value="ECO:0007669"/>
    <property type="project" value="TreeGrafter"/>
</dbReference>
<dbReference type="FunFam" id="3.20.20.150:FF:000004">
    <property type="entry name" value="Mannonate dehydratase"/>
    <property type="match status" value="1"/>
</dbReference>
<dbReference type="FunFam" id="3.20.20.150:FF:000005">
    <property type="entry name" value="Mannonate dehydratase"/>
    <property type="match status" value="1"/>
</dbReference>
<dbReference type="Gene3D" id="3.20.20.150">
    <property type="entry name" value="Divalent-metal-dependent TIM barrel enzymes"/>
    <property type="match status" value="1"/>
</dbReference>
<dbReference type="HAMAP" id="MF_00106">
    <property type="entry name" value="UxuA"/>
    <property type="match status" value="1"/>
</dbReference>
<dbReference type="InterPro" id="IPR004628">
    <property type="entry name" value="Man_deHydtase"/>
</dbReference>
<dbReference type="InterPro" id="IPR036237">
    <property type="entry name" value="Xyl_isomerase-like_sf"/>
</dbReference>
<dbReference type="NCBIfam" id="NF003027">
    <property type="entry name" value="PRK03906.1"/>
    <property type="match status" value="1"/>
</dbReference>
<dbReference type="NCBIfam" id="TIGR00695">
    <property type="entry name" value="uxuA"/>
    <property type="match status" value="1"/>
</dbReference>
<dbReference type="PANTHER" id="PTHR30387">
    <property type="entry name" value="MANNONATE DEHYDRATASE"/>
    <property type="match status" value="1"/>
</dbReference>
<dbReference type="PANTHER" id="PTHR30387:SF2">
    <property type="entry name" value="MANNONATE DEHYDRATASE"/>
    <property type="match status" value="1"/>
</dbReference>
<dbReference type="Pfam" id="PF03786">
    <property type="entry name" value="UxuA"/>
    <property type="match status" value="1"/>
</dbReference>
<dbReference type="PIRSF" id="PIRSF016049">
    <property type="entry name" value="Man_dehyd"/>
    <property type="match status" value="1"/>
</dbReference>
<dbReference type="SUPFAM" id="SSF51658">
    <property type="entry name" value="Xylose isomerase-like"/>
    <property type="match status" value="1"/>
</dbReference>
<accession>A5UB85</accession>
<gene>
    <name evidence="1" type="primary">uxuA</name>
    <name type="ordered locus">CGSHiEE_03030</name>
</gene>
<feature type="chain" id="PRO_1000034329" description="Mannonate dehydratase">
    <location>
        <begin position="1"/>
        <end position="394"/>
    </location>
</feature>
<sequence length="394" mass="45334">MEQAWRWYGPKDPVSLSDIRQAGATGIVTALHHIPNGEIWRIEEIKKRKTEIENAGLSWSVVESVPVHEEIKTQTGNYQKWINNYKQTLRNLAQCGIDTVCYNFMPVLDWTRTDLAYELPDGSKALRFDHIAFAAFELHILKRPDAEKAYNQEEQVAARTYYDKMSAQDITQLTRNIIAGLPGAEEGYTLDEFQTQLDRYKDISSEKFRTHLAYFLNEIVPVAQEVGIKMAIHPDDPPRPILGLPRIVSTIEDMQWFVETQPLPANGFTMCTGSYGVRSDNDLVKMIEQFADRIYFAHLRSTQREDNPLTFHKAAHLEGDVDMFNVVKALLNEEYRRLNQGETRLIPMRPDHGHQMLDDLRKKTNPGYSAIGRLKGLAEFRGLEMALKKVYFNK</sequence>
<proteinExistence type="inferred from homology"/>